<gene>
    <name type="primary">ROPN1</name>
</gene>
<sequence>MPQTDKQICIPPELPELLKQFTKAAIRSQPQDLIQWAAEYFGAMSRGEIPPVRERSERVALSNWAELTPELLKILHSRVGGRLIVQADELAQMWKVLNLPTDLFNSVMNVGRFTEEIEWLKFLALACSSLGVTIAKTLKIVCEVLSSDHDSGPPRIPFSTFQFLYTYIAEVDGEISASHVSRMLNYIEQEVIGPDGLIKVNDFTQNPRVRLE</sequence>
<evidence type="ECO:0000250" key="1"/>
<evidence type="ECO:0000250" key="2">
    <source>
        <dbReference type="UniProtKB" id="Q4KLL5"/>
    </source>
</evidence>
<evidence type="ECO:0000250" key="3">
    <source>
        <dbReference type="UniProtKB" id="Q96C74"/>
    </source>
</evidence>
<evidence type="ECO:0000250" key="4">
    <source>
        <dbReference type="UniProtKB" id="Q9BZX4"/>
    </source>
</evidence>
<evidence type="ECO:0000250" key="5">
    <source>
        <dbReference type="UniProtKB" id="Q9ESG2"/>
    </source>
</evidence>
<evidence type="ECO:0000305" key="6"/>
<protein>
    <recommendedName>
        <fullName>Ropporin-1</fullName>
    </recommendedName>
    <alternativeName>
        <fullName>Rhophilin-associated protein 1</fullName>
    </alternativeName>
</protein>
<organism>
    <name type="scientific">Bos taurus</name>
    <name type="common">Bovine</name>
    <dbReference type="NCBI Taxonomy" id="9913"/>
    <lineage>
        <taxon>Eukaryota</taxon>
        <taxon>Metazoa</taxon>
        <taxon>Chordata</taxon>
        <taxon>Craniata</taxon>
        <taxon>Vertebrata</taxon>
        <taxon>Euteleostomi</taxon>
        <taxon>Mammalia</taxon>
        <taxon>Eutheria</taxon>
        <taxon>Laurasiatheria</taxon>
        <taxon>Artiodactyla</taxon>
        <taxon>Ruminantia</taxon>
        <taxon>Pecora</taxon>
        <taxon>Bovidae</taxon>
        <taxon>Bovinae</taxon>
        <taxon>Bos</taxon>
    </lineage>
</organism>
<feature type="chain" id="PRO_0000307391" description="Ropporin-1">
    <location>
        <begin position="1"/>
        <end position="212"/>
    </location>
</feature>
<feature type="domain" description="RIIa">
    <location>
        <begin position="12"/>
        <end position="43"/>
    </location>
</feature>
<feature type="region of interest" description="Interaction with RHPN1" evidence="1">
    <location>
        <begin position="209"/>
        <end position="212"/>
    </location>
</feature>
<feature type="modified residue" description="Phosphoserine" evidence="2">
    <location>
        <position position="56"/>
    </location>
</feature>
<comment type="function">
    <text evidence="5">Important for male fertility. With ROPN1L, involved in fibrous sheath integrity and sperm motility, plays a role in PKA-dependent signaling processes required for spermatozoa capacitation.</text>
</comment>
<comment type="subunit">
    <text evidence="3 4 5">Homodimer. Interacts with AKAP3 (By similarity). May interact with SPA17 (By similarity). Interacts with RHPN1 (By similarity). Interacts with FSCB; the interaction increases upon spermatozoa capacitation conditions (By similarity). Interacts with CFAP61 (By similarity).</text>
</comment>
<comment type="subcellular location">
    <subcellularLocation>
        <location evidence="5">Cell projection</location>
        <location evidence="5">Cilium</location>
        <location evidence="5">Flagellum</location>
    </subcellularLocation>
    <text evidence="5">In the sperm tail, found in the principal piece and in the cytoplasmic droplet located at the distal end of the midpiece. Inner surface of the fibrous sheath.</text>
</comment>
<comment type="domain">
    <text evidence="1">The RIIa domain mediates interaction with AKAP3.</text>
</comment>
<comment type="PTM">
    <text evidence="5">Sumoylated, sumoylation decreases upon spermatozoa capacitation conditions.</text>
</comment>
<comment type="miscellaneous">
    <text>'Ropporin' comes from the Japanese word 'oppo' which means 'tail'.</text>
</comment>
<comment type="similarity">
    <text evidence="6">Belongs to the ropporin family.</text>
</comment>
<name>ROP1_BOVIN</name>
<accession>Q3T064</accession>
<keyword id="KW-0966">Cell projection</keyword>
<keyword id="KW-0969">Cilium</keyword>
<keyword id="KW-0282">Flagellum</keyword>
<keyword id="KW-0597">Phosphoprotein</keyword>
<keyword id="KW-1185">Reference proteome</keyword>
<keyword id="KW-0832">Ubl conjugation</keyword>
<dbReference type="EMBL" id="BC102549">
    <property type="protein sequence ID" value="AAI02550.1"/>
    <property type="molecule type" value="mRNA"/>
</dbReference>
<dbReference type="RefSeq" id="NP_001069368.1">
    <property type="nucleotide sequence ID" value="NM_001075900.1"/>
</dbReference>
<dbReference type="SMR" id="Q3T064"/>
<dbReference type="FunCoup" id="Q3T064">
    <property type="interactions" value="124"/>
</dbReference>
<dbReference type="IntAct" id="Q3T064">
    <property type="interactions" value="1"/>
</dbReference>
<dbReference type="MINT" id="Q3T064"/>
<dbReference type="STRING" id="9913.ENSBTAP00000009113"/>
<dbReference type="PaxDb" id="9913-ENSBTAP00000009113"/>
<dbReference type="GeneID" id="527583"/>
<dbReference type="KEGG" id="bta:527583"/>
<dbReference type="CTD" id="54763"/>
<dbReference type="eggNOG" id="ENOG502R2JI">
    <property type="taxonomic scope" value="Eukaryota"/>
</dbReference>
<dbReference type="InParanoid" id="Q3T064"/>
<dbReference type="OrthoDB" id="10067602at2759"/>
<dbReference type="Proteomes" id="UP000009136">
    <property type="component" value="Unplaced"/>
</dbReference>
<dbReference type="GO" id="GO:0005737">
    <property type="term" value="C:cytoplasm"/>
    <property type="evidence" value="ECO:0000318"/>
    <property type="project" value="GO_Central"/>
</dbReference>
<dbReference type="GO" id="GO:0031514">
    <property type="term" value="C:motile cilium"/>
    <property type="evidence" value="ECO:0000318"/>
    <property type="project" value="GO_Central"/>
</dbReference>
<dbReference type="GO" id="GO:0044782">
    <property type="term" value="P:cilium organization"/>
    <property type="evidence" value="ECO:0000250"/>
    <property type="project" value="UniProtKB"/>
</dbReference>
<dbReference type="GO" id="GO:0030317">
    <property type="term" value="P:flagellated sperm motility"/>
    <property type="evidence" value="ECO:0000250"/>
    <property type="project" value="UniProtKB"/>
</dbReference>
<dbReference type="GO" id="GO:0061512">
    <property type="term" value="P:protein localization to cilium"/>
    <property type="evidence" value="ECO:0000250"/>
    <property type="project" value="UniProtKB"/>
</dbReference>
<dbReference type="GO" id="GO:0001932">
    <property type="term" value="P:regulation of protein phosphorylation"/>
    <property type="evidence" value="ECO:0000250"/>
    <property type="project" value="UniProtKB"/>
</dbReference>
<dbReference type="GO" id="GO:0048240">
    <property type="term" value="P:sperm capacitation"/>
    <property type="evidence" value="ECO:0000250"/>
    <property type="project" value="UniProtKB"/>
</dbReference>
<dbReference type="CDD" id="cd23019">
    <property type="entry name" value="DD_ROP"/>
    <property type="match status" value="1"/>
</dbReference>
<dbReference type="FunFam" id="1.20.890.10:FF:000004">
    <property type="entry name" value="ropporin-1-like protein isoform X2"/>
    <property type="match status" value="1"/>
</dbReference>
<dbReference type="Gene3D" id="1.20.890.10">
    <property type="entry name" value="cAMP-dependent protein kinase regulatory subunit, dimerization-anchoring domain"/>
    <property type="match status" value="1"/>
</dbReference>
<dbReference type="InterPro" id="IPR047844">
    <property type="entry name" value="ROP_DD"/>
</dbReference>
<dbReference type="PANTHER" id="PTHR14952">
    <property type="entry name" value="ROPPORIN-1-LIKE PROTEIN"/>
    <property type="match status" value="1"/>
</dbReference>
<dbReference type="PANTHER" id="PTHR14952:SF12">
    <property type="entry name" value="ROPPORIN-1B"/>
    <property type="match status" value="1"/>
</dbReference>
<dbReference type="SUPFAM" id="SSF47391">
    <property type="entry name" value="Dimerization-anchoring domain of cAMP-dependent PK regulatory subunit"/>
    <property type="match status" value="1"/>
</dbReference>
<reference key="1">
    <citation type="submission" date="2005-08" db="EMBL/GenBank/DDBJ databases">
        <authorList>
            <consortium name="NIH - Mammalian Gene Collection (MGC) project"/>
        </authorList>
    </citation>
    <scope>NUCLEOTIDE SEQUENCE [LARGE SCALE MRNA]</scope>
    <source>
        <strain>Crossbred X Angus</strain>
        <tissue>Liver</tissue>
    </source>
</reference>
<proteinExistence type="evidence at transcript level"/>